<dbReference type="EMBL" id="EU043314">
    <property type="protein sequence ID" value="ABS54502.1"/>
    <property type="molecule type" value="Genomic_DNA"/>
</dbReference>
<dbReference type="RefSeq" id="YP_001687240.1">
    <property type="nucleotide sequence ID" value="NC_010359.1"/>
</dbReference>
<dbReference type="SMR" id="B0YPQ4"/>
<dbReference type="GeneID" id="5952201"/>
<dbReference type="GO" id="GO:0042170">
    <property type="term" value="C:plastid membrane"/>
    <property type="evidence" value="ECO:0007669"/>
    <property type="project" value="UniProtKB-SubCell"/>
</dbReference>
<dbReference type="GO" id="GO:0042651">
    <property type="term" value="C:thylakoid membrane"/>
    <property type="evidence" value="ECO:0007669"/>
    <property type="project" value="UniProtKB-UniRule"/>
</dbReference>
<dbReference type="HAMAP" id="MF_00293">
    <property type="entry name" value="PSII_PsbN"/>
    <property type="match status" value="1"/>
</dbReference>
<dbReference type="InterPro" id="IPR003398">
    <property type="entry name" value="PSII_PsbN"/>
</dbReference>
<dbReference type="PANTHER" id="PTHR35326">
    <property type="entry name" value="PROTEIN PSBN"/>
    <property type="match status" value="1"/>
</dbReference>
<dbReference type="PANTHER" id="PTHR35326:SF3">
    <property type="entry name" value="PROTEIN PSBN"/>
    <property type="match status" value="1"/>
</dbReference>
<dbReference type="Pfam" id="PF02468">
    <property type="entry name" value="PsbN"/>
    <property type="match status" value="1"/>
</dbReference>
<accession>B0YPQ4</accession>
<evidence type="ECO:0000255" key="1">
    <source>
        <dbReference type="HAMAP-Rule" id="MF_00293"/>
    </source>
</evidence>
<evidence type="ECO:0000305" key="2"/>
<proteinExistence type="inferred from homology"/>
<feature type="chain" id="PRO_0000362174" description="Protein PsbN">
    <location>
        <begin position="1"/>
        <end position="47"/>
    </location>
</feature>
<feature type="transmembrane region" description="Helical" evidence="1">
    <location>
        <begin position="7"/>
        <end position="29"/>
    </location>
</feature>
<name>PSBN_ANEMR</name>
<keyword id="KW-0472">Membrane</keyword>
<keyword id="KW-0934">Plastid</keyword>
<keyword id="KW-0812">Transmembrane</keyword>
<keyword id="KW-1133">Transmembrane helix</keyword>
<organism>
    <name type="scientific">Aneura mirabilis</name>
    <name type="common">Parasitic liverwort</name>
    <name type="synonym">Cryptothallus mirabilis</name>
    <dbReference type="NCBI Taxonomy" id="280810"/>
    <lineage>
        <taxon>Eukaryota</taxon>
        <taxon>Viridiplantae</taxon>
        <taxon>Streptophyta</taxon>
        <taxon>Embryophyta</taxon>
        <taxon>Marchantiophyta</taxon>
        <taxon>Jungermanniopsida</taxon>
        <taxon>Metzgeriidae</taxon>
        <taxon>Metzgeriales</taxon>
        <taxon>Aneuraceae</taxon>
        <taxon>Aneura</taxon>
    </lineage>
</organism>
<geneLocation type="non-photosynthetic plastid"/>
<sequence length="47" mass="5043">METATSVAISISCLLISFTGYALYTAFGNPASGLKDPFEGHEDWSDQ</sequence>
<protein>
    <recommendedName>
        <fullName evidence="1">Protein PsbN</fullName>
    </recommendedName>
</protein>
<gene>
    <name evidence="1" type="primary">psbN</name>
</gene>
<reference key="1">
    <citation type="journal article" date="2008" name="Mol. Biol. Evol.">
        <title>Functional gene losses occur with minimal size reduction in the plastid genome of the parasitic liverwort Aneura mirabilis.</title>
        <authorList>
            <person name="Wickett N.J."/>
            <person name="Zhang Y."/>
            <person name="Hansen S.K."/>
            <person name="Roper J.M."/>
            <person name="Kuehl J.V."/>
            <person name="Plock S.A."/>
            <person name="Wolf P.G."/>
            <person name="dePamphilis C.W."/>
            <person name="Boore J.L."/>
            <person name="Goffinet B."/>
        </authorList>
    </citation>
    <scope>NUCLEOTIDE SEQUENCE [LARGE SCALE GENOMIC DNA]</scope>
</reference>
<comment type="function">
    <text evidence="1">May play a role in photosystem I and II biogenesis.</text>
</comment>
<comment type="subcellular location">
    <subcellularLocation>
        <location evidence="2">Plastid membrane</location>
        <topology evidence="1">Single-pass membrane protein</topology>
    </subcellularLocation>
</comment>
<comment type="similarity">
    <text evidence="1">Belongs to the PsbN family.</text>
</comment>
<comment type="caution">
    <text evidence="2">This organism being non-photosynthetic, the role of this protein is uncertain.</text>
</comment>
<comment type="caution">
    <text evidence="1">Originally thought to be a component of PSII; based on experiments in Synechocystis, N.tabacum and barley, and its absence from PSII in T.elongatus and T.vulcanus, this is probably not true.</text>
</comment>